<organism>
    <name type="scientific">Escherichia coli (strain K12)</name>
    <dbReference type="NCBI Taxonomy" id="83333"/>
    <lineage>
        <taxon>Bacteria</taxon>
        <taxon>Pseudomonadati</taxon>
        <taxon>Pseudomonadota</taxon>
        <taxon>Gammaproteobacteria</taxon>
        <taxon>Enterobacterales</taxon>
        <taxon>Enterobacteriaceae</taxon>
        <taxon>Escherichia</taxon>
    </lineage>
</organism>
<dbReference type="EC" id="1.1.1.-" evidence="1"/>
<dbReference type="EMBL" id="U00096">
    <property type="protein sequence ID" value="AAC74395.1"/>
    <property type="molecule type" value="Genomic_DNA"/>
</dbReference>
<dbReference type="EMBL" id="AP009048">
    <property type="protein sequence ID" value="BAA14889.2"/>
    <property type="molecule type" value="Genomic_DNA"/>
</dbReference>
<dbReference type="PIR" id="D64880">
    <property type="entry name" value="D64880"/>
</dbReference>
<dbReference type="RefSeq" id="NP_415829.1">
    <property type="nucleotide sequence ID" value="NC_000913.3"/>
</dbReference>
<dbReference type="RefSeq" id="WP_000737347.1">
    <property type="nucleotide sequence ID" value="NZ_SSZK01000012.1"/>
</dbReference>
<dbReference type="SMR" id="P76043"/>
<dbReference type="BioGRID" id="4263191">
    <property type="interactions" value="8"/>
</dbReference>
<dbReference type="DIP" id="DIP-11608N"/>
<dbReference type="FunCoup" id="P76043">
    <property type="interactions" value="91"/>
</dbReference>
<dbReference type="STRING" id="511145.b1313"/>
<dbReference type="PaxDb" id="511145-b1313"/>
<dbReference type="EnsemblBacteria" id="AAC74395">
    <property type="protein sequence ID" value="AAC74395"/>
    <property type="gene ID" value="b1313"/>
</dbReference>
<dbReference type="GeneID" id="945971"/>
<dbReference type="KEGG" id="ecj:JW1306"/>
<dbReference type="KEGG" id="eco:b1313"/>
<dbReference type="KEGG" id="ecoc:C3026_07695"/>
<dbReference type="PATRIC" id="fig|1411691.4.peg.966"/>
<dbReference type="EchoBASE" id="EB3673"/>
<dbReference type="eggNOG" id="COG1063">
    <property type="taxonomic scope" value="Bacteria"/>
</dbReference>
<dbReference type="HOGENOM" id="CLU_026673_9_0_6"/>
<dbReference type="InParanoid" id="P76043"/>
<dbReference type="OMA" id="WGIWGHR"/>
<dbReference type="OrthoDB" id="4190732at2"/>
<dbReference type="PhylomeDB" id="P76043"/>
<dbReference type="BioCyc" id="EcoCyc:G6651-MONOMER"/>
<dbReference type="BioCyc" id="MetaCyc:G6651-MONOMER"/>
<dbReference type="PRO" id="PR:P76043"/>
<dbReference type="Proteomes" id="UP000000625">
    <property type="component" value="Chromosome"/>
</dbReference>
<dbReference type="GO" id="GO:0016616">
    <property type="term" value="F:oxidoreductase activity, acting on the CH-OH group of donors, NAD or NADP as acceptor"/>
    <property type="evidence" value="ECO:0000314"/>
    <property type="project" value="EcoCyc"/>
</dbReference>
<dbReference type="GO" id="GO:0008270">
    <property type="term" value="F:zinc ion binding"/>
    <property type="evidence" value="ECO:0000314"/>
    <property type="project" value="EcoCyc"/>
</dbReference>
<dbReference type="CDD" id="cd08255">
    <property type="entry name" value="2-desacetyl-2-hydroxyethyl_bacteriochlorophyllide_like"/>
    <property type="match status" value="1"/>
</dbReference>
<dbReference type="Gene3D" id="3.90.180.10">
    <property type="entry name" value="Medium-chain alcohol dehydrogenases, catalytic domain"/>
    <property type="match status" value="2"/>
</dbReference>
<dbReference type="Gene3D" id="3.40.50.720">
    <property type="entry name" value="NAD(P)-binding Rossmann-like Domain"/>
    <property type="match status" value="1"/>
</dbReference>
<dbReference type="InterPro" id="IPR013149">
    <property type="entry name" value="ADH-like_C"/>
</dbReference>
<dbReference type="InterPro" id="IPR011032">
    <property type="entry name" value="GroES-like_sf"/>
</dbReference>
<dbReference type="InterPro" id="IPR036291">
    <property type="entry name" value="NAD(P)-bd_dom_sf"/>
</dbReference>
<dbReference type="PANTHER" id="PTHR43350:SF19">
    <property type="entry name" value="D-GULOSIDE 3-DEHYDROGENASE"/>
    <property type="match status" value="1"/>
</dbReference>
<dbReference type="PANTHER" id="PTHR43350">
    <property type="entry name" value="NAD-DEPENDENT ALCOHOL DEHYDROGENASE"/>
    <property type="match status" value="1"/>
</dbReference>
<dbReference type="Pfam" id="PF00107">
    <property type="entry name" value="ADH_zinc_N"/>
    <property type="match status" value="1"/>
</dbReference>
<dbReference type="SUPFAM" id="SSF50129">
    <property type="entry name" value="GroES-like"/>
    <property type="match status" value="1"/>
</dbReference>
<dbReference type="SUPFAM" id="SSF51735">
    <property type="entry name" value="NAD(P)-binding Rossmann-fold domains"/>
    <property type="match status" value="1"/>
</dbReference>
<name>YCJQ_ECOLI</name>
<reference key="1">
    <citation type="journal article" date="1996" name="DNA Res.">
        <title>A 570-kb DNA sequence of the Escherichia coli K-12 genome corresponding to the 28.0-40.1 min region on the linkage map.</title>
        <authorList>
            <person name="Aiba H."/>
            <person name="Baba T."/>
            <person name="Fujita K."/>
            <person name="Hayashi K."/>
            <person name="Inada T."/>
            <person name="Isono K."/>
            <person name="Itoh T."/>
            <person name="Kasai H."/>
            <person name="Kashimoto K."/>
            <person name="Kimura S."/>
            <person name="Kitakawa M."/>
            <person name="Kitagawa M."/>
            <person name="Makino K."/>
            <person name="Miki T."/>
            <person name="Mizobuchi K."/>
            <person name="Mori H."/>
            <person name="Mori T."/>
            <person name="Motomura K."/>
            <person name="Nakade S."/>
            <person name="Nakamura Y."/>
            <person name="Nashimoto H."/>
            <person name="Nishio Y."/>
            <person name="Oshima T."/>
            <person name="Saito N."/>
            <person name="Sampei G."/>
            <person name="Seki Y."/>
            <person name="Sivasundaram S."/>
            <person name="Tagami H."/>
            <person name="Takeda J."/>
            <person name="Takemoto K."/>
            <person name="Takeuchi Y."/>
            <person name="Wada C."/>
            <person name="Yamamoto Y."/>
            <person name="Horiuchi T."/>
        </authorList>
    </citation>
    <scope>NUCLEOTIDE SEQUENCE [LARGE SCALE GENOMIC DNA]</scope>
    <source>
        <strain>K12 / W3110 / ATCC 27325 / DSM 5911</strain>
    </source>
</reference>
<reference key="2">
    <citation type="journal article" date="1997" name="Science">
        <title>The complete genome sequence of Escherichia coli K-12.</title>
        <authorList>
            <person name="Blattner F.R."/>
            <person name="Plunkett G. III"/>
            <person name="Bloch C.A."/>
            <person name="Perna N.T."/>
            <person name="Burland V."/>
            <person name="Riley M."/>
            <person name="Collado-Vides J."/>
            <person name="Glasner J.D."/>
            <person name="Rode C.K."/>
            <person name="Mayhew G.F."/>
            <person name="Gregor J."/>
            <person name="Davis N.W."/>
            <person name="Kirkpatrick H.A."/>
            <person name="Goeden M.A."/>
            <person name="Rose D.J."/>
            <person name="Mau B."/>
            <person name="Shao Y."/>
        </authorList>
    </citation>
    <scope>NUCLEOTIDE SEQUENCE [LARGE SCALE GENOMIC DNA]</scope>
    <source>
        <strain>K12 / MG1655 / ATCC 47076</strain>
    </source>
</reference>
<reference key="3">
    <citation type="journal article" date="2006" name="Mol. Syst. Biol.">
        <title>Highly accurate genome sequences of Escherichia coli K-12 strains MG1655 and W3110.</title>
        <authorList>
            <person name="Hayashi K."/>
            <person name="Morooka N."/>
            <person name="Yamamoto Y."/>
            <person name="Fujita K."/>
            <person name="Isono K."/>
            <person name="Choi S."/>
            <person name="Ohtsubo E."/>
            <person name="Baba T."/>
            <person name="Wanner B.L."/>
            <person name="Mori H."/>
            <person name="Horiuchi T."/>
        </authorList>
    </citation>
    <scope>NUCLEOTIDE SEQUENCE [LARGE SCALE GENOMIC DNA]</scope>
    <scope>SEQUENCE REVISION TO 234-243</scope>
    <source>
        <strain>K12 / W3110 / ATCC 27325 / DSM 5911</strain>
    </source>
</reference>
<reference key="4">
    <citation type="journal article" date="2019" name="Biochemistry">
        <title>Functional Characterization of the ycjQRS Gene Cluster from Escherichia coli: A Novel Pathway for the Transformation of D-Gulosides to D-Glucosides.</title>
        <authorList>
            <person name="Mukherjee K."/>
            <person name="Huddleston J.P."/>
            <person name="Narindoshvili T."/>
            <person name="Nemmara V.V."/>
            <person name="Raushel F.M."/>
        </authorList>
    </citation>
    <scope>FUNCTION</scope>
    <scope>CATALYTIC ACTIVITY</scope>
    <scope>COFACTOR</scope>
    <scope>SUBSTRATE SPECIFICITY</scope>
    <scope>BIOPHYSICOCHEMICAL PROPERTIES</scope>
    <source>
        <strain>K12</strain>
    </source>
</reference>
<proteinExistence type="evidence at protein level"/>
<gene>
    <name type="primary">ycjQ</name>
    <name type="ordered locus">b1313</name>
    <name type="ordered locus">JW1306</name>
</gene>
<keyword id="KW-0119">Carbohydrate metabolism</keyword>
<keyword id="KW-0479">Metal-binding</keyword>
<keyword id="KW-0520">NAD</keyword>
<keyword id="KW-0560">Oxidoreductase</keyword>
<keyword id="KW-1185">Reference proteome</keyword>
<keyword id="KW-0862">Zinc</keyword>
<sequence length="350" mass="38217">MKKLVATAPRVAALVEYEDRAILANEVKIRVRFGAPKHGTEVVDFRAASPFIDEDFNGEWQMFTPRPADAPRGIEFGKFQLGNMVVGDIIECGSDVTDYAVGDSVCGYGPLSETVIINAVNNYKLRKMPQGSSWKNAVCYDPAQFAMSGVRDANVRVGDFVVVVGLGAIGQIAIQLAKRAGASVVIGVDPIAHRCDIARRHGADFCLNPIGTDVGKEIKTLTGKQGADVIIETSGYADALQSALRGLAYGGTISYVAFAKPFAEGFNLGREAHFNNAKIVFSRACSEPNPDYPRWSRKRIEETCWELLMNGYLNCEDLIDPVVTFANSPESYMQYVDQHPEQSIKMGVTF</sequence>
<accession>P76043</accession>
<accession>P78306</accession>
<feature type="chain" id="PRO_0000160890" description="D-guloside 3-dehydrogenase">
    <location>
        <begin position="1"/>
        <end position="350"/>
    </location>
</feature>
<comment type="function">
    <text evidence="1">Catalyzes the NAD(+)-dependent oxidation of the hydroxyl group at C3 of D-gulosides leading to 3-dehydro-D-gulosides. Probably functions in a metabolic pathway that transforms D-gulosides to D-glucosides. Is also able to catalyze the reverse reactions, i.e. the NADH-dependent reduction of the oxo group at C3 of 3-dehydro-D-gulosides leading to D-gulosides. In vitro, can oxidize D-gulose and methyl beta-D-guloside, and reduce methyl alpha-3-dehydro-D-guloside and methyl beta-3-dehydro-D-guloside. However, the actual specific physiological substrates for this metabolic pathway are unknown.</text>
</comment>
<comment type="catalytic activity">
    <reaction evidence="1">
        <text>a D-guloside + NAD(+) = a 3-dehydro-D-guloside + NADH + H(+)</text>
        <dbReference type="Rhea" id="RHEA:61720"/>
        <dbReference type="ChEBI" id="CHEBI:15378"/>
        <dbReference type="ChEBI" id="CHEBI:57540"/>
        <dbReference type="ChEBI" id="CHEBI:57945"/>
        <dbReference type="ChEBI" id="CHEBI:145014"/>
        <dbReference type="ChEBI" id="CHEBI:145016"/>
    </reaction>
</comment>
<comment type="cofactor">
    <cofactor evidence="1">
        <name>Zn(2+)</name>
        <dbReference type="ChEBI" id="CHEBI:29105"/>
    </cofactor>
    <text evidence="1">Binds 1 Zn(2+) ions per subunit.</text>
</comment>
<comment type="biophysicochemical properties">
    <kinetics>
        <KM evidence="1">5.1 mM for D-gulose (at pH 8.0 and 30 degrees Celsius)</KM>
        <KM evidence="1">5.6 mM for D-gulose (at pH 9.0 and 30 degrees Celsius)</KM>
        <KM evidence="1">12.5 mM for methyl beta-D-guloside (at pH 8.0 and 30 degrees Celsius)</KM>
        <KM evidence="1">12 mM for methyl beta-D-guloside (at pH 9.0 and 30 degrees Celsius)</KM>
        <KM evidence="1">9.4 mM for methyl alpha-3-dehydro-D-guloside (at pH 7.0 and 30 degrees Celsius)</KM>
        <KM evidence="1">1.5 mM for methyl alpha-3-dehydro-D-guloside (at pH 8.0 and 30 degrees Celsius)</KM>
        <KM evidence="1">2.3 mM for methyl beta-3-dehydro-D-guloside (at pH 7.0 and 30 degrees Celsius)</KM>
        <KM evidence="1">7 mM for methyl beta-3-dehydro-D-guloside (at pH 8.0 and 30 degrees Celsius)</KM>
        <text evidence="1">kcat is 0.18 sec(-1) for the NAD(+)-dependent oxidation of D-gulose (at pH 8.0 and 30 degrees Celsius). kcat is 0.23 sec(-1) for the NAD(+)-dependent oxidation of D-gulose (at pH 9.0 and 30 degrees Celsius). kcat is 0.35 sec(-1) for the NAD(+)-dependent oxidation of methyl beta-D-guloside (at pH 8.0 and 30 degrees Celsius). kcat is 1.2 sec(-1) for the NAD(+)-dependent oxidation of methyl beta-D-guloside (at pH 9.0 and 30 degrees Celsius). kcat is 18.5 sec(-1) for the NADH-dependent reduction of methyl alpha-3-dehydro-D-guloside (at pH 7.0 and 30 degrees Celsius). kcat is 3.8 sec(-1) for the NADH-dependent reduction of methyl alpha-3-dehydro-D-guloside (at pH 8.0 and 30 degrees Celsius). kcat is 7.0 sec(-1) for the NADH-dependent reduction of methyl beta-3-dehydro-D-guloside (at pH 7.0 and 30 degrees Celsius). kcat is 9.7 sec(-1) for the NADH-dependent reduction of methyl beta-3-dehydro-D-guloside (at pH 8.0 and 30 degrees Celsius).</text>
    </kinetics>
</comment>
<comment type="similarity">
    <text evidence="2">Belongs to the zinc-containing alcohol dehydrogenase family.</text>
</comment>
<protein>
    <recommendedName>
        <fullName evidence="3">D-guloside 3-dehydrogenase</fullName>
        <ecNumber evidence="1">1.1.1.-</ecNumber>
    </recommendedName>
</protein>
<evidence type="ECO:0000269" key="1">
    <source>
    </source>
</evidence>
<evidence type="ECO:0000305" key="2"/>
<evidence type="ECO:0000305" key="3">
    <source>
    </source>
</evidence>